<comment type="function">
    <text>Alpha-galactosidase that specifically removes branched alpha-1,3-linked galactose residues present in blood group B antigens. Has no activity toward linear alpha-1,3-linked galactose residues.</text>
</comment>
<comment type="catalytic activity">
    <reaction evidence="2">
        <text>Hydrolysis of terminal, non-reducing branched (1-&gt;3)-alpha-D-galactosidic residues, producing free D-galactose.</text>
        <dbReference type="EC" id="3.2.1.n1"/>
    </reaction>
</comment>
<comment type="catalytic activity">
    <reaction evidence="2">
        <text>Hydrolysis of terminal, non-reducing alpha-D-galactose residues in alpha-D-galactosides, including galactose oligosaccharides, galactomannans and galactolipids.</text>
        <dbReference type="EC" id="3.2.1.22"/>
    </reaction>
</comment>
<comment type="similarity">
    <text evidence="3">Belongs to the glycosyl hydrolase 110 family. A subfamily.</text>
</comment>
<keyword id="KW-0326">Glycosidase</keyword>
<keyword id="KW-0378">Hydrolase</keyword>
<keyword id="KW-1185">Reference proteome</keyword>
<keyword id="KW-0677">Repeat</keyword>
<keyword id="KW-0732">Signal</keyword>
<sequence length="568" mass="65147">MMSVWFIQLAIFAQSRIIEVFPEQGKDIENIALALKKAADCKGRPVTVKFSPGIYQLDRAKSSQVLYYISNTTSELDDPDPTKHIGLYLNTLKNITIDGCGSTLLMNGEMTSFVLDKCEGIVLKNFNIDYKHPTQTEVEVLEEGNDYLIVQVHPTSQYRIVDAQLEWYGDGWSFKNGIAQSYDRISEMTWRSWSPMENLLRTVELRPNVLYLQYKEKPQVGLHTIFQMRDSFRDEVSGFVNRSKGILLENINFYYLGNFGVVCQYSENITVDRCNFAPRPGSGRTNAGFADFIQVSGCRGMIDIKNSRFIGAHDDPINIHGTHLRVIEFLSDNRLKLRFMHDQTFGFEAFFKGDDIELVDSRSLLVVGKCKVKEAKLVTPREMELTLSSPLSSEVMQQKDLVIENVTWTPEVRITNNYFARVPTRGILITTRRKSLIEGNTFYGMQMSGIFVADDGLSWYESGPVHDLTIRQNTFLNCGEPIISIDPENREYKGAVHKNITIEENYFYMRKNSSCAIRAKAVDGLMIRHNLIYSLDTEKNKESDFIQMYNCNEVTIKENRVQLHHLFK</sequence>
<accession>Q8A2Z5</accession>
<evidence type="ECO:0000255" key="1"/>
<evidence type="ECO:0000269" key="2">
    <source>
    </source>
</evidence>
<evidence type="ECO:0000305" key="3"/>
<feature type="signal peptide" evidence="1">
    <location>
        <begin position="1"/>
        <end position="17"/>
    </location>
</feature>
<feature type="chain" id="PRO_0000348473" description="Alpha-1,3-galactosidase A">
    <location>
        <begin position="18"/>
        <end position="568"/>
    </location>
</feature>
<feature type="repeat" description="PbH1 1">
    <location>
        <begin position="87"/>
        <end position="125"/>
    </location>
</feature>
<feature type="repeat" description="PbH1 2">
    <location>
        <begin position="243"/>
        <end position="265"/>
    </location>
</feature>
<feature type="repeat" description="PbH1 3">
    <location>
        <begin position="299"/>
        <end position="321"/>
    </location>
</feature>
<feature type="repeat" description="PbH1 4">
    <location>
        <begin position="409"/>
        <end position="431"/>
    </location>
</feature>
<feature type="repeat" description="PbH1 5">
    <location>
        <begin position="432"/>
        <end position="454"/>
    </location>
</feature>
<feature type="repeat" description="PbH1 6">
    <location>
        <begin position="465"/>
        <end position="486"/>
    </location>
</feature>
<name>GLAA_BACTN</name>
<reference key="1">
    <citation type="journal article" date="2007" name="Nat. Biotechnol.">
        <title>Bacterial glycosidases for the production of universal red blood cells.</title>
        <authorList>
            <person name="Liu Q.P."/>
            <person name="Sulzenbacher G."/>
            <person name="Yuan H."/>
            <person name="Bennett E.P."/>
            <person name="Pietz G."/>
            <person name="Saunders K."/>
            <person name="Spence J."/>
            <person name="Nudelman E."/>
            <person name="Levery S.B."/>
            <person name="White T."/>
            <person name="Neveu J.M."/>
            <person name="Lane W.S."/>
            <person name="Bourne Y."/>
            <person name="Olsson M.L."/>
            <person name="Henrissat B."/>
            <person name="Clausen H."/>
        </authorList>
    </citation>
    <scope>NUCLEOTIDE SEQUENCE [GENOMIC DNA]</scope>
</reference>
<reference key="2">
    <citation type="journal article" date="2003" name="Science">
        <title>A genomic view of the human-Bacteroides thetaiotaomicron symbiosis.</title>
        <authorList>
            <person name="Xu J."/>
            <person name="Bjursell M.K."/>
            <person name="Himrod J."/>
            <person name="Deng S."/>
            <person name="Carmichael L.K."/>
            <person name="Chiang H.C."/>
            <person name="Hooper L.V."/>
            <person name="Gordon J.I."/>
        </authorList>
    </citation>
    <scope>NUCLEOTIDE SEQUENCE [LARGE SCALE GENOMIC DNA]</scope>
    <source>
        <strain>ATCC 29148 / DSM 2079 / JCM 5827 / CCUG 10774 / NCTC 10582 / VPI-5482 / E50</strain>
    </source>
</reference>
<reference key="3">
    <citation type="journal article" date="2008" name="J. Biol. Chem.">
        <title>Identification of a GH110 subfamily of alpha1,3-galactosidases: novel enzymes for removal of the alpha3Gal xenotransplantation antigen.</title>
        <authorList>
            <person name="Liu Q.P."/>
            <person name="Yuan H."/>
            <person name="Bennett E.P."/>
            <person name="Levery S.B."/>
            <person name="Nudelman E."/>
            <person name="Spence J."/>
            <person name="Pietz G."/>
            <person name="Saunders K."/>
            <person name="White T."/>
            <person name="Olsson M.L."/>
            <person name="Henrissat B."/>
            <person name="Sulzenbacher G."/>
            <person name="Clausen H."/>
        </authorList>
    </citation>
    <scope>ENZYME ACTIVITY</scope>
</reference>
<protein>
    <recommendedName>
        <fullName>Alpha-1,3-galactosidase A</fullName>
        <ecNumber>3.2.1.n1</ecNumber>
    </recommendedName>
    <alternativeName>
        <fullName>BtGal110A</fullName>
    </alternativeName>
    <alternativeName>
        <fullName>Exo-alpha-galactosidase A</fullName>
        <ecNumber>3.2.1.22</ecNumber>
    </alternativeName>
</protein>
<proteinExistence type="inferred from homology"/>
<organism>
    <name type="scientific">Bacteroides thetaiotaomicron (strain ATCC 29148 / DSM 2079 / JCM 5827 / CCUG 10774 / NCTC 10582 / VPI-5482 / E50)</name>
    <dbReference type="NCBI Taxonomy" id="226186"/>
    <lineage>
        <taxon>Bacteria</taxon>
        <taxon>Pseudomonadati</taxon>
        <taxon>Bacteroidota</taxon>
        <taxon>Bacteroidia</taxon>
        <taxon>Bacteroidales</taxon>
        <taxon>Bacteroidaceae</taxon>
        <taxon>Bacteroides</taxon>
    </lineage>
</organism>
<gene>
    <name type="primary">glaA</name>
    <name type="ordered locus">BT_3160</name>
</gene>
<dbReference type="EC" id="3.2.1.n1"/>
<dbReference type="EC" id="3.2.1.22"/>
<dbReference type="EMBL" id="AM109956">
    <property type="protein sequence ID" value="CAJ33352.1"/>
    <property type="molecule type" value="Genomic_DNA"/>
</dbReference>
<dbReference type="EMBL" id="AE015928">
    <property type="protein sequence ID" value="AAO78266.1"/>
    <property type="molecule type" value="Genomic_DNA"/>
</dbReference>
<dbReference type="RefSeq" id="NP_812072.1">
    <property type="nucleotide sequence ID" value="NC_004663.1"/>
</dbReference>
<dbReference type="SMR" id="Q8A2Z5"/>
<dbReference type="STRING" id="226186.BT_3160"/>
<dbReference type="CAZy" id="GH110">
    <property type="family name" value="Glycoside Hydrolase Family 110"/>
</dbReference>
<dbReference type="PaxDb" id="226186-BT_3160"/>
<dbReference type="EnsemblBacteria" id="AAO78266">
    <property type="protein sequence ID" value="AAO78266"/>
    <property type="gene ID" value="BT_3160"/>
</dbReference>
<dbReference type="KEGG" id="bth:BT_3160"/>
<dbReference type="PATRIC" id="fig|226186.12.peg.3220"/>
<dbReference type="eggNOG" id="COG5434">
    <property type="taxonomic scope" value="Bacteria"/>
</dbReference>
<dbReference type="HOGENOM" id="CLU_017693_0_0_10"/>
<dbReference type="InParanoid" id="Q8A2Z5"/>
<dbReference type="OrthoDB" id="9807299at2"/>
<dbReference type="Proteomes" id="UP000001414">
    <property type="component" value="Chromosome"/>
</dbReference>
<dbReference type="GO" id="GO:0004557">
    <property type="term" value="F:alpha-galactosidase activity"/>
    <property type="evidence" value="ECO:0007669"/>
    <property type="project" value="UniProtKB-EC"/>
</dbReference>
<dbReference type="Gene3D" id="2.160.20.10">
    <property type="entry name" value="Single-stranded right-handed beta-helix, Pectin lyase-like"/>
    <property type="match status" value="2"/>
</dbReference>
<dbReference type="InterPro" id="IPR056441">
    <property type="entry name" value="Beta-barrel_GLAA-B_II"/>
</dbReference>
<dbReference type="InterPro" id="IPR039448">
    <property type="entry name" value="Beta_helix"/>
</dbReference>
<dbReference type="InterPro" id="IPR006626">
    <property type="entry name" value="PbH1"/>
</dbReference>
<dbReference type="InterPro" id="IPR012334">
    <property type="entry name" value="Pectin_lyas_fold"/>
</dbReference>
<dbReference type="InterPro" id="IPR011050">
    <property type="entry name" value="Pectin_lyase_fold/virulence"/>
</dbReference>
<dbReference type="Pfam" id="PF23764">
    <property type="entry name" value="Beta-barrel_GLAA-B_II"/>
    <property type="match status" value="1"/>
</dbReference>
<dbReference type="Pfam" id="PF13229">
    <property type="entry name" value="Beta_helix"/>
    <property type="match status" value="1"/>
</dbReference>
<dbReference type="SMART" id="SM00710">
    <property type="entry name" value="PbH1"/>
    <property type="match status" value="6"/>
</dbReference>
<dbReference type="SUPFAM" id="SSF51126">
    <property type="entry name" value="Pectin lyase-like"/>
    <property type="match status" value="1"/>
</dbReference>